<dbReference type="EC" id="6.3.2.-" evidence="3 4"/>
<dbReference type="EMBL" id="MG384316">
    <property type="protein sequence ID" value="AUO29226.1"/>
    <property type="molecule type" value="mRNA"/>
</dbReference>
<dbReference type="EMBL" id="CH476606">
    <property type="protein sequence ID" value="EAU31031.1"/>
    <property type="status" value="ALT_SEQ"/>
    <property type="molecule type" value="Genomic_DNA"/>
</dbReference>
<dbReference type="RefSeq" id="XP_001217485.1">
    <property type="nucleotide sequence ID" value="XM_001217484.1"/>
</dbReference>
<dbReference type="SMR" id="Q0CBN5"/>
<dbReference type="STRING" id="341663.Q0CBN5"/>
<dbReference type="ESTHER" id="asptn-pnga">
    <property type="family name" value="Thioesterase"/>
</dbReference>
<dbReference type="GeneID" id="4323094"/>
<dbReference type="eggNOG" id="KOG1176">
    <property type="taxonomic scope" value="Eukaryota"/>
</dbReference>
<dbReference type="eggNOG" id="KOG1202">
    <property type="taxonomic scope" value="Eukaryota"/>
</dbReference>
<dbReference type="HOGENOM" id="CLU_000022_23_6_1"/>
<dbReference type="OrthoDB" id="10253869at2759"/>
<dbReference type="Proteomes" id="UP000007963">
    <property type="component" value="Unassembled WGS sequence"/>
</dbReference>
<dbReference type="GO" id="GO:0031957">
    <property type="term" value="F:very long-chain fatty acid-CoA ligase activity"/>
    <property type="evidence" value="ECO:0007669"/>
    <property type="project" value="TreeGrafter"/>
</dbReference>
<dbReference type="GO" id="GO:0006633">
    <property type="term" value="P:fatty acid biosynthetic process"/>
    <property type="evidence" value="ECO:0007669"/>
    <property type="project" value="TreeGrafter"/>
</dbReference>
<dbReference type="CDD" id="cd05906">
    <property type="entry name" value="A_NRPS_TubE_like"/>
    <property type="match status" value="1"/>
</dbReference>
<dbReference type="Gene3D" id="3.30.300.30">
    <property type="match status" value="1"/>
</dbReference>
<dbReference type="Gene3D" id="1.10.1200.10">
    <property type="entry name" value="ACP-like"/>
    <property type="match status" value="1"/>
</dbReference>
<dbReference type="Gene3D" id="3.40.50.1820">
    <property type="entry name" value="alpha/beta hydrolase"/>
    <property type="match status" value="1"/>
</dbReference>
<dbReference type="Gene3D" id="3.40.50.12780">
    <property type="entry name" value="N-terminal domain of ligase-like"/>
    <property type="match status" value="1"/>
</dbReference>
<dbReference type="InterPro" id="IPR029058">
    <property type="entry name" value="AB_hydrolase_fold"/>
</dbReference>
<dbReference type="InterPro" id="IPR036736">
    <property type="entry name" value="ACP-like_sf"/>
</dbReference>
<dbReference type="InterPro" id="IPR045851">
    <property type="entry name" value="AMP-bd_C_sf"/>
</dbReference>
<dbReference type="InterPro" id="IPR000873">
    <property type="entry name" value="AMP-dep_synth/lig_dom"/>
</dbReference>
<dbReference type="InterPro" id="IPR042099">
    <property type="entry name" value="ANL_N_sf"/>
</dbReference>
<dbReference type="InterPro" id="IPR009081">
    <property type="entry name" value="PP-bd_ACP"/>
</dbReference>
<dbReference type="InterPro" id="IPR001031">
    <property type="entry name" value="Thioesterase"/>
</dbReference>
<dbReference type="PANTHER" id="PTHR24096">
    <property type="entry name" value="LONG-CHAIN-FATTY-ACID--COA LIGASE"/>
    <property type="match status" value="1"/>
</dbReference>
<dbReference type="PANTHER" id="PTHR24096:SF267">
    <property type="entry name" value="MALONATE--COA LIGASE ACSF3, MITOCHONDRIAL"/>
    <property type="match status" value="1"/>
</dbReference>
<dbReference type="Pfam" id="PF00501">
    <property type="entry name" value="AMP-binding"/>
    <property type="match status" value="1"/>
</dbReference>
<dbReference type="Pfam" id="PF00550">
    <property type="entry name" value="PP-binding"/>
    <property type="match status" value="1"/>
</dbReference>
<dbReference type="Pfam" id="PF00975">
    <property type="entry name" value="Thioesterase"/>
    <property type="match status" value="1"/>
</dbReference>
<dbReference type="SUPFAM" id="SSF56801">
    <property type="entry name" value="Acetyl-CoA synthetase-like"/>
    <property type="match status" value="1"/>
</dbReference>
<dbReference type="SUPFAM" id="SSF47336">
    <property type="entry name" value="ACP-like"/>
    <property type="match status" value="1"/>
</dbReference>
<dbReference type="SUPFAM" id="SSF53474">
    <property type="entry name" value="alpha/beta-Hydrolases"/>
    <property type="match status" value="1"/>
</dbReference>
<dbReference type="PROSITE" id="PS50075">
    <property type="entry name" value="CARRIER"/>
    <property type="match status" value="1"/>
</dbReference>
<name>PNGA_ASPTN</name>
<evidence type="ECO:0000255" key="1"/>
<evidence type="ECO:0000255" key="2">
    <source>
        <dbReference type="PROSITE-ProRule" id="PRU00258"/>
    </source>
</evidence>
<evidence type="ECO:0000269" key="3">
    <source>
    </source>
</evidence>
<evidence type="ECO:0000269" key="4">
    <source>
    </source>
</evidence>
<evidence type="ECO:0000303" key="5">
    <source>
    </source>
</evidence>
<evidence type="ECO:0000305" key="6"/>
<evidence type="ECO:0000305" key="7">
    <source>
    </source>
</evidence>
<evidence type="ECO:0000305" key="8">
    <source>
    </source>
</evidence>
<accession>Q0CBN5</accession>
<accession>A0A2I6SS13</accession>
<keyword id="KW-0436">Ligase</keyword>
<keyword id="KW-0596">Phosphopantetheine</keyword>
<keyword id="KW-0597">Phosphoprotein</keyword>
<keyword id="KW-1185">Reference proteome</keyword>
<organism>
    <name type="scientific">Aspergillus terreus (strain NIH 2624 / FGSC A1156)</name>
    <dbReference type="NCBI Taxonomy" id="341663"/>
    <lineage>
        <taxon>Eukaryota</taxon>
        <taxon>Fungi</taxon>
        <taxon>Dikarya</taxon>
        <taxon>Ascomycota</taxon>
        <taxon>Pezizomycotina</taxon>
        <taxon>Eurotiomycetes</taxon>
        <taxon>Eurotiomycetidae</taxon>
        <taxon>Eurotiales</taxon>
        <taxon>Aspergillaceae</taxon>
        <taxon>Aspergillus</taxon>
        <taxon>Aspergillus subgen. Circumdati</taxon>
    </lineage>
</organism>
<comment type="function">
    <text evidence="3 4">Nonribosomal peptide synthetase that mediates the biosynthesis of phenguignardic acid (PubMed:26851300, PubMed:29305695). PngA alone is sufficient for phenguignardic acid synthesis (PubMed:26851300, PubMed:29305695). PngA first activates phenylpyruvic acid (PPA) through its A domain to AMP-PPA (PubMed:26851300, PubMed:29305695). The PPA unit is then loaded to the T domain and eventually transferred to the TE domain (PubMed:26851300, PubMed:29305695). Another PPA unit is then loaded onto the T domain (PubMed:26851300, PubMed:29305695). The TE domain likely promotes the enolate formation on the attached unit, followed by a nucleophilic attack on the carbonyl to yield an ether linkage between the two units (PubMed:26851300, PubMed:29305695). Finally, the TE domain probably catalyzes a similar reaction to give the cyclized dioxolanone core and releases phenguignardic acid (PubMed:26851300, PubMed:29305695).</text>
</comment>
<comment type="catalytic activity">
    <reaction evidence="3 4">
        <text>2 3-phenylpyruvate + H(+) = phenguignardate + H2O</text>
        <dbReference type="Rhea" id="RHEA:63904"/>
        <dbReference type="ChEBI" id="CHEBI:15377"/>
        <dbReference type="ChEBI" id="CHEBI:15378"/>
        <dbReference type="ChEBI" id="CHEBI:18005"/>
        <dbReference type="ChEBI" id="CHEBI:149629"/>
    </reaction>
    <physiologicalReaction direction="left-to-right" evidence="3 4">
        <dbReference type="Rhea" id="RHEA:63905"/>
    </physiologicalReaction>
</comment>
<comment type="domain">
    <text evidence="7 8">AtrA has a A-T-TE domain architecture (Probable). The adenylation (A) domain recognizes and activates the aryl acid substrates, and loads them onto the thiolation (T) domain (Probable). The thioesterase (TE) domain shares the missing condensation (C) domain function, and is responsible for condensation and final product release (Probable).</text>
</comment>
<comment type="similarity">
    <text evidence="6">Belongs to the NRP synthetase family.</text>
</comment>
<comment type="sequence caution" evidence="6">
    <conflict type="erroneous gene model prediction">
        <sequence resource="EMBL-CDS" id="EAU31031"/>
    </conflict>
</comment>
<gene>
    <name evidence="5" type="primary">pngA</name>
    <name type="ORF">ATEG_08899</name>
</gene>
<feature type="chain" id="PRO_0000438985" description="Nonribosomal peptide synthetase pngA">
    <location>
        <begin position="1"/>
        <end position="946"/>
    </location>
</feature>
<feature type="domain" description="Carrier" evidence="2">
    <location>
        <begin position="580"/>
        <end position="659"/>
    </location>
</feature>
<feature type="region of interest" description="Adenylation (A) domain" evidence="1 7">
    <location>
        <begin position="32"/>
        <end position="450"/>
    </location>
</feature>
<feature type="region of interest" description="Thioesterase (TE) domain" evidence="1 7">
    <location>
        <begin position="681"/>
        <end position="933"/>
    </location>
</feature>
<feature type="modified residue" description="O-(pantetheine 4'-phosphoryl)serine" evidence="2">
    <location>
        <position position="618"/>
    </location>
</feature>
<sequence>MNKKLKLFSMPGAQTSQIVIMLFQSLLHLLEAIASREPTRYIITYSIGNTHTPEIFSYSDLLQSARKAAGALRFKYHVVPGSVVLLHFNDHWNSMLWFWATLIADCIPAMSTPFSNNPETRLRHLKHLSTTLRSPKCLTTASLAAEFAGQEYITPICVQSLDYENLVHLPIKEGGDIAVLMFTSGSSGHCKVVPLTHEQILASLSGKAWTFPLPDNTAQLNWVGMNHVASLVEVHLFSIYTHSDQVHIPTVEVLSHVTLFLDLIHRHRVSRTFAPNFFLAKLRAALSADDTLAKYTGSLSNLRYIVSGGEANVTQTINDLAQMLKKCGAVSNVIVPAFGMTETCAGAIYNTSFPQYDVEHGLPFASVGSCMPGIQVRIVQLNGNGNSVPPGTVGNLEICGPVVLKGYFNDPAATKSTFTNDNWFKTGDLAFVDDNGMLVLAGREKDSIIVNGANYSPHDIESAIDEANIPGLISGFTCCFSTFPPSADTEEVIIVYLPNYTPADTVRRSETAAAIRKVAMMSVGVRATVLPLDRTMLEKSTLGKLARGKIKAAYERGDYKSYQEANEQMMALHHKVSHHQPRSGLEQSLLGVFTRTIPENLTEDFDVLTSIFDLGITSIELLKLKRGIEDLIGHGQIPLITLMTNPTIRTLSDALKQHAQQRDCSIYNPVVVLQSQGKKPPIWLVHPVGGEVMIFMNLAKFIIDRPVYGLRARGFNDGEDPFHTFEEIVSTYHASIKEKQPSGPYAIAGYSYGAKVAFDIAKALEHNGDEVRFLGLLDLPPSLNGTQMRAVAWKEMLLHICRMVGVIREEGIKKIYPRLEPENISPRHAIETVMGEADVTRLAELGLTASALERWANLTHALQRCIVDHKTNGSVAGADAFYCDPMASMAISNEQWACDYIGKWSDHTRSPPRFHHIAGTHYTILDAENIFSFQKTFLRALNDRGI</sequence>
<protein>
    <recommendedName>
        <fullName evidence="5">Nonribosomal peptide synthetase pngA</fullName>
        <ecNumber evidence="3 4">6.3.2.-</ecNumber>
    </recommendedName>
    <alternativeName>
        <fullName evidence="5">Phenguignardic acid synthase</fullName>
    </alternativeName>
</protein>
<proteinExistence type="evidence at protein level"/>
<reference key="1">
    <citation type="journal article" date="2018" name="Appl. Microbiol. Biotechnol.">
        <title>Production of alpha-keto carboxylic acid dimers in yeast by overexpression of NRPS-like genes from Aspergillus terreus.</title>
        <authorList>
            <person name="Huehner E."/>
            <person name="Backhaus K."/>
            <person name="Kraut R."/>
            <person name="Li S.M."/>
        </authorList>
    </citation>
    <scope>NUCLEOTIDE SEQUENCE [MRNA]</scope>
    <scope>DOMAIN</scope>
    <scope>FUNCTION</scope>
    <scope>CATALYTIC ACTIVITY</scope>
    <source>
        <strain>NIH 2624 / FGSC A1156</strain>
    </source>
</reference>
<reference key="2">
    <citation type="submission" date="2005-09" db="EMBL/GenBank/DDBJ databases">
        <title>Annotation of the Aspergillus terreus NIH2624 genome.</title>
        <authorList>
            <person name="Birren B.W."/>
            <person name="Lander E.S."/>
            <person name="Galagan J.E."/>
            <person name="Nusbaum C."/>
            <person name="Devon K."/>
            <person name="Henn M."/>
            <person name="Ma L.-J."/>
            <person name="Jaffe D.B."/>
            <person name="Butler J."/>
            <person name="Alvarez P."/>
            <person name="Gnerre S."/>
            <person name="Grabherr M."/>
            <person name="Kleber M."/>
            <person name="Mauceli E.W."/>
            <person name="Brockman W."/>
            <person name="Rounsley S."/>
            <person name="Young S.K."/>
            <person name="LaButti K."/>
            <person name="Pushparaj V."/>
            <person name="DeCaprio D."/>
            <person name="Crawford M."/>
            <person name="Koehrsen M."/>
            <person name="Engels R."/>
            <person name="Montgomery P."/>
            <person name="Pearson M."/>
            <person name="Howarth C."/>
            <person name="Larson L."/>
            <person name="Luoma S."/>
            <person name="White J."/>
            <person name="Alvarado L."/>
            <person name="Kodira C.D."/>
            <person name="Zeng Q."/>
            <person name="Oleary S."/>
            <person name="Yandava C."/>
            <person name="Denning D.W."/>
            <person name="Nierman W.C."/>
            <person name="Milne T."/>
            <person name="Madden K."/>
        </authorList>
    </citation>
    <scope>NUCLEOTIDE SEQUENCE [LARGE SCALE GENOMIC DNA]</scope>
    <source>
        <strain>NIH 2624 / FGSC A1156</strain>
    </source>
</reference>
<reference key="3">
    <citation type="journal article" date="2016" name="Fungal Genet. Biol.">
        <title>Characterization of the product of a nonribosomal peptide synthetase-like (NRPS-like) gene using the doxycycline dependent Tet-on system in Aspergillus terreus.</title>
        <authorList>
            <person name="Sun W.W."/>
            <person name="Guo C.J."/>
            <person name="Wang C.C."/>
        </authorList>
    </citation>
    <scope>FUNCTION</scope>
    <scope>CATALYTIC ACTIVITY</scope>
    <scope>DOMAIN</scope>
</reference>